<protein>
    <recommendedName>
        <fullName>Retinal homeobox protein Rax</fullName>
    </recommendedName>
    <alternativeName>
        <fullName>DjRax</fullName>
    </alternativeName>
</protein>
<gene>
    <name type="primary">RAX</name>
</gene>
<name>RX_DUGJA</name>
<proteinExistence type="evidence at transcript level"/>
<dbReference type="EMBL" id="AB017633">
    <property type="protein sequence ID" value="BAA75673.1"/>
    <property type="molecule type" value="mRNA"/>
</dbReference>
<dbReference type="SMR" id="O97039"/>
<dbReference type="GO" id="GO:0005634">
    <property type="term" value="C:nucleus"/>
    <property type="evidence" value="ECO:0007669"/>
    <property type="project" value="UniProtKB-SubCell"/>
</dbReference>
<dbReference type="GO" id="GO:0000981">
    <property type="term" value="F:DNA-binding transcription factor activity, RNA polymerase II-specific"/>
    <property type="evidence" value="ECO:0007669"/>
    <property type="project" value="InterPro"/>
</dbReference>
<dbReference type="GO" id="GO:0000978">
    <property type="term" value="F:RNA polymerase II cis-regulatory region sequence-specific DNA binding"/>
    <property type="evidence" value="ECO:0007669"/>
    <property type="project" value="TreeGrafter"/>
</dbReference>
<dbReference type="GO" id="GO:0045944">
    <property type="term" value="P:positive regulation of transcription by RNA polymerase II"/>
    <property type="evidence" value="ECO:0007669"/>
    <property type="project" value="InterPro"/>
</dbReference>
<dbReference type="CDD" id="cd00086">
    <property type="entry name" value="homeodomain"/>
    <property type="match status" value="1"/>
</dbReference>
<dbReference type="FunFam" id="1.10.10.60:FF:000071">
    <property type="entry name" value="Retinal homeobox gene 2"/>
    <property type="match status" value="1"/>
</dbReference>
<dbReference type="Gene3D" id="1.10.10.60">
    <property type="entry name" value="Homeodomain-like"/>
    <property type="match status" value="1"/>
</dbReference>
<dbReference type="InterPro" id="IPR001356">
    <property type="entry name" value="HD"/>
</dbReference>
<dbReference type="InterPro" id="IPR017970">
    <property type="entry name" value="Homeobox_CS"/>
</dbReference>
<dbReference type="InterPro" id="IPR009057">
    <property type="entry name" value="Homeodomain-like_sf"/>
</dbReference>
<dbReference type="InterPro" id="IPR043562">
    <property type="entry name" value="RAX/RAX2"/>
</dbReference>
<dbReference type="PANTHER" id="PTHR46271">
    <property type="entry name" value="HOMEOBOX PROTEIN, PUTATIVE-RELATED"/>
    <property type="match status" value="1"/>
</dbReference>
<dbReference type="PANTHER" id="PTHR46271:SF4">
    <property type="entry name" value="HOMEOBOX PROTEIN, PUTATIVE-RELATED"/>
    <property type="match status" value="1"/>
</dbReference>
<dbReference type="Pfam" id="PF00046">
    <property type="entry name" value="Homeodomain"/>
    <property type="match status" value="1"/>
</dbReference>
<dbReference type="SMART" id="SM00389">
    <property type="entry name" value="HOX"/>
    <property type="match status" value="1"/>
</dbReference>
<dbReference type="SUPFAM" id="SSF46689">
    <property type="entry name" value="Homeodomain-like"/>
    <property type="match status" value="1"/>
</dbReference>
<dbReference type="PROSITE" id="PS00027">
    <property type="entry name" value="HOMEOBOX_1"/>
    <property type="match status" value="1"/>
</dbReference>
<dbReference type="PROSITE" id="PS50071">
    <property type="entry name" value="HOMEOBOX_2"/>
    <property type="match status" value="1"/>
</dbReference>
<organism>
    <name type="scientific">Dugesia japonica</name>
    <name type="common">Planarian</name>
    <dbReference type="NCBI Taxonomy" id="6161"/>
    <lineage>
        <taxon>Eukaryota</taxon>
        <taxon>Metazoa</taxon>
        <taxon>Spiralia</taxon>
        <taxon>Lophotrochozoa</taxon>
        <taxon>Platyhelminthes</taxon>
        <taxon>Rhabditophora</taxon>
        <taxon>Seriata</taxon>
        <taxon>Tricladida</taxon>
        <taxon>Continenticola</taxon>
        <taxon>Geoplanoidea</taxon>
        <taxon>Dugesiidae</taxon>
        <taxon>Dugesia</taxon>
    </lineage>
</organism>
<reference key="1">
    <citation type="submission" date="1998-09" db="EMBL/GenBank/DDBJ databases">
        <title>Organization and reorganization of the eye in the planarian, Dugesia japonica.</title>
        <authorList>
            <person name="Sakai F."/>
            <person name="Agata K."/>
            <person name="Orii H."/>
            <person name="Umesono Y."/>
            <person name="Watanabe K."/>
        </authorList>
    </citation>
    <scope>NUCLEOTIDE SEQUENCE [MRNA]</scope>
    <source>
        <strain>GI</strain>
    </source>
</reference>
<feature type="chain" id="PRO_0000049287" description="Retinal homeobox protein Rax">
    <location>
        <begin position="1" status="less than"/>
        <end position="268"/>
    </location>
</feature>
<feature type="DNA-binding region" description="Homeobox" evidence="1">
    <location>
        <begin position="87"/>
        <end position="146"/>
    </location>
</feature>
<feature type="region of interest" description="Disordered" evidence="2">
    <location>
        <begin position="56"/>
        <end position="87"/>
    </location>
</feature>
<feature type="non-terminal residue">
    <location>
        <position position="1"/>
    </location>
</feature>
<evidence type="ECO:0000255" key="1">
    <source>
        <dbReference type="PROSITE-ProRule" id="PRU00108"/>
    </source>
</evidence>
<evidence type="ECO:0000256" key="2">
    <source>
        <dbReference type="SAM" id="MobiDB-lite"/>
    </source>
</evidence>
<evidence type="ECO:0000305" key="3"/>
<comment type="subcellular location">
    <subcellularLocation>
        <location evidence="1">Nucleus</location>
    </subcellularLocation>
</comment>
<comment type="developmental stage">
    <text>Expressed in the ventral forebrain.</text>
</comment>
<comment type="similarity">
    <text evidence="3">Belongs to the paired homeobox family. Bicoid subfamily.</text>
</comment>
<sequence>INKRYNIDDILGIPDQKSLMLNNYQHQSVVENEICDSYQKKDISVNNRELLMVKRCPKDSSEQSPAISEADETESSPDQLSNCNKKHRRNRTTFTTYQLHELERAFEKSHYPDVYSREELAMKISLPEVRVQVWFQNRRAKWRRQEKIEAANHTHNLQEVFPNVGKSLTSSLFPANPYPFLNMSLPSVESTSFFYHQNGMLNPMSMVNNLGFSNFSSLNLEPPKIPMTLPYGLFNEFSNFLSTRSSSKDLNSNSKTCSIRTADNLNTE</sequence>
<keyword id="KW-0217">Developmental protein</keyword>
<keyword id="KW-0238">DNA-binding</keyword>
<keyword id="KW-0371">Homeobox</keyword>
<keyword id="KW-0539">Nucleus</keyword>
<keyword id="KW-0804">Transcription</keyword>
<keyword id="KW-0805">Transcription regulation</keyword>
<accession>O97039</accession>